<keyword id="KW-0002">3D-structure</keyword>
<keyword id="KW-0025">Alternative splicing</keyword>
<keyword id="KW-0479">Metal-binding</keyword>
<keyword id="KW-0539">Nucleus</keyword>
<keyword id="KW-1185">Reference proteome</keyword>
<keyword id="KW-0677">Repeat</keyword>
<keyword id="KW-0862">Zinc</keyword>
<keyword id="KW-0863">Zinc-finger</keyword>
<dbReference type="EMBL" id="AC006585">
    <property type="protein sequence ID" value="AAD23033.1"/>
    <property type="molecule type" value="Genomic_DNA"/>
</dbReference>
<dbReference type="EMBL" id="AC007266">
    <property type="protein sequence ID" value="AAM15476.1"/>
    <property type="molecule type" value="Genomic_DNA"/>
</dbReference>
<dbReference type="EMBL" id="CP002685">
    <property type="protein sequence ID" value="AEC07629.1"/>
    <property type="molecule type" value="Genomic_DNA"/>
</dbReference>
<dbReference type="EMBL" id="AY058130">
    <property type="protein sequence ID" value="AAL25546.1"/>
    <property type="molecule type" value="mRNA"/>
</dbReference>
<dbReference type="EMBL" id="AY140103">
    <property type="protein sequence ID" value="AAM98244.1"/>
    <property type="molecule type" value="mRNA"/>
</dbReference>
<dbReference type="EMBL" id="BT002107">
    <property type="protein sequence ID" value="AAN72118.1"/>
    <property type="molecule type" value="mRNA"/>
</dbReference>
<dbReference type="EMBL" id="AY085729">
    <property type="protein sequence ID" value="AAM62947.1"/>
    <property type="molecule type" value="mRNA"/>
</dbReference>
<dbReference type="PIR" id="E84640">
    <property type="entry name" value="E84640"/>
</dbReference>
<dbReference type="RefSeq" id="NP_180052.1">
    <molecule id="Q9SK53-1"/>
    <property type="nucleotide sequence ID" value="NM_128038.3"/>
</dbReference>
<dbReference type="PDB" id="6QTX">
    <property type="method" value="X-ray"/>
    <property type="resolution" value="1.95 A"/>
    <property type="chains" value="B=287-294"/>
</dbReference>
<dbReference type="PDBsum" id="6QTX"/>
<dbReference type="SMR" id="Q9SK53"/>
<dbReference type="BioGRID" id="2368">
    <property type="interactions" value="14"/>
</dbReference>
<dbReference type="FunCoup" id="Q9SK53">
    <property type="interactions" value="1"/>
</dbReference>
<dbReference type="IntAct" id="Q9SK53">
    <property type="interactions" value="12"/>
</dbReference>
<dbReference type="STRING" id="3702.Q9SK53"/>
<dbReference type="PaxDb" id="3702-AT2G24790.1"/>
<dbReference type="ProteomicsDB" id="240920">
    <molecule id="Q9SK53-1"/>
</dbReference>
<dbReference type="EnsemblPlants" id="AT2G24790.1">
    <molecule id="Q9SK53-1"/>
    <property type="protein sequence ID" value="AT2G24790.1"/>
    <property type="gene ID" value="AT2G24790"/>
</dbReference>
<dbReference type="GeneID" id="817016"/>
<dbReference type="Gramene" id="AT2G24790.1">
    <molecule id="Q9SK53-1"/>
    <property type="protein sequence ID" value="AT2G24790.1"/>
    <property type="gene ID" value="AT2G24790"/>
</dbReference>
<dbReference type="KEGG" id="ath:AT2G24790"/>
<dbReference type="Araport" id="AT2G24790"/>
<dbReference type="TAIR" id="AT2G24790">
    <property type="gene designation" value="COL3"/>
</dbReference>
<dbReference type="eggNOG" id="KOG1601">
    <property type="taxonomic scope" value="Eukaryota"/>
</dbReference>
<dbReference type="HOGENOM" id="CLU_028225_3_2_1"/>
<dbReference type="InParanoid" id="Q9SK53"/>
<dbReference type="OMA" id="CDGKIHS"/>
<dbReference type="PhylomeDB" id="Q9SK53"/>
<dbReference type="PRO" id="PR:Q9SK53"/>
<dbReference type="Proteomes" id="UP000006548">
    <property type="component" value="Chromosome 2"/>
</dbReference>
<dbReference type="ExpressionAtlas" id="Q9SK53">
    <property type="expression patterns" value="baseline and differential"/>
</dbReference>
<dbReference type="GO" id="GO:0005634">
    <property type="term" value="C:nucleus"/>
    <property type="evidence" value="ECO:0000314"/>
    <property type="project" value="TAIR"/>
</dbReference>
<dbReference type="GO" id="GO:0003700">
    <property type="term" value="F:DNA-binding transcription factor activity"/>
    <property type="evidence" value="ECO:0000250"/>
    <property type="project" value="TAIR"/>
</dbReference>
<dbReference type="GO" id="GO:0043565">
    <property type="term" value="F:sequence-specific DNA binding"/>
    <property type="evidence" value="ECO:0000353"/>
    <property type="project" value="TAIR"/>
</dbReference>
<dbReference type="GO" id="GO:0000976">
    <property type="term" value="F:transcription cis-regulatory region binding"/>
    <property type="evidence" value="ECO:0000353"/>
    <property type="project" value="TAIR"/>
</dbReference>
<dbReference type="GO" id="GO:0008270">
    <property type="term" value="F:zinc ion binding"/>
    <property type="evidence" value="ECO:0007669"/>
    <property type="project" value="UniProtKB-KW"/>
</dbReference>
<dbReference type="GO" id="GO:0010161">
    <property type="term" value="P:red light signaling pathway"/>
    <property type="evidence" value="ECO:0000315"/>
    <property type="project" value="TAIR"/>
</dbReference>
<dbReference type="GO" id="GO:0009909">
    <property type="term" value="P:regulation of flower development"/>
    <property type="evidence" value="ECO:0007669"/>
    <property type="project" value="InterPro"/>
</dbReference>
<dbReference type="GO" id="GO:0010099">
    <property type="term" value="P:regulation of photomorphogenesis"/>
    <property type="evidence" value="ECO:0000315"/>
    <property type="project" value="TAIR"/>
</dbReference>
<dbReference type="CDD" id="cd19821">
    <property type="entry name" value="Bbox1_BBX-like"/>
    <property type="match status" value="2"/>
</dbReference>
<dbReference type="InterPro" id="IPR010402">
    <property type="entry name" value="CCT_domain"/>
</dbReference>
<dbReference type="InterPro" id="IPR045281">
    <property type="entry name" value="CONSTANS-like"/>
</dbReference>
<dbReference type="InterPro" id="IPR049808">
    <property type="entry name" value="CONSTANS-like_Bbox1"/>
</dbReference>
<dbReference type="InterPro" id="IPR000315">
    <property type="entry name" value="Znf_B-box"/>
</dbReference>
<dbReference type="PANTHER" id="PTHR31319:SF54">
    <property type="entry name" value="ZINC FINGER PROTEIN CONSTANS-LIKE 3"/>
    <property type="match status" value="1"/>
</dbReference>
<dbReference type="PANTHER" id="PTHR31319">
    <property type="entry name" value="ZINC FINGER PROTEIN CONSTANS-LIKE 4"/>
    <property type="match status" value="1"/>
</dbReference>
<dbReference type="Pfam" id="PF06203">
    <property type="entry name" value="CCT"/>
    <property type="match status" value="1"/>
</dbReference>
<dbReference type="Pfam" id="PF00643">
    <property type="entry name" value="zf-B_box"/>
    <property type="match status" value="1"/>
</dbReference>
<dbReference type="SMART" id="SM00336">
    <property type="entry name" value="BBOX"/>
    <property type="match status" value="2"/>
</dbReference>
<dbReference type="PROSITE" id="PS51017">
    <property type="entry name" value="CCT"/>
    <property type="match status" value="1"/>
</dbReference>
<dbReference type="PROSITE" id="PS50119">
    <property type="entry name" value="ZF_BBOX"/>
    <property type="match status" value="2"/>
</dbReference>
<proteinExistence type="evidence at protein level"/>
<comment type="interaction">
    <interactant intactId="EBI-1995108">
        <id>Q9SK53</id>
    </interactant>
    <interactant intactId="EBI-301649">
        <id>P43254</id>
        <label>COP1</label>
    </interactant>
    <organismsDiffer>false</organismsDiffer>
    <experiments>3</experiments>
</comment>
<comment type="subcellular location">
    <subcellularLocation>
        <location evidence="2">Nucleus</location>
    </subcellularLocation>
</comment>
<comment type="alternative products">
    <event type="alternative splicing"/>
    <isoform>
        <id>Q9SK53-1</id>
        <name>1</name>
        <sequence type="displayed"/>
    </isoform>
    <text>A number of isoforms are produced. According to EST sequences.</text>
</comment>
<comment type="similarity">
    <text evidence="3">Belongs to the CONSTANS family.</text>
</comment>
<protein>
    <recommendedName>
        <fullName>Zinc finger protein CONSTANS-LIKE 3</fullName>
    </recommendedName>
</protein>
<reference key="1">
    <citation type="journal article" date="1999" name="Nature">
        <title>Sequence and analysis of chromosome 2 of the plant Arabidopsis thaliana.</title>
        <authorList>
            <person name="Lin X."/>
            <person name="Kaul S."/>
            <person name="Rounsley S.D."/>
            <person name="Shea T.P."/>
            <person name="Benito M.-I."/>
            <person name="Town C.D."/>
            <person name="Fujii C.Y."/>
            <person name="Mason T.M."/>
            <person name="Bowman C.L."/>
            <person name="Barnstead M.E."/>
            <person name="Feldblyum T.V."/>
            <person name="Buell C.R."/>
            <person name="Ketchum K.A."/>
            <person name="Lee J.J."/>
            <person name="Ronning C.M."/>
            <person name="Koo H.L."/>
            <person name="Moffat K.S."/>
            <person name="Cronin L.A."/>
            <person name="Shen M."/>
            <person name="Pai G."/>
            <person name="Van Aken S."/>
            <person name="Umayam L."/>
            <person name="Tallon L.J."/>
            <person name="Gill J.E."/>
            <person name="Adams M.D."/>
            <person name="Carrera A.J."/>
            <person name="Creasy T.H."/>
            <person name="Goodman H.M."/>
            <person name="Somerville C.R."/>
            <person name="Copenhaver G.P."/>
            <person name="Preuss D."/>
            <person name="Nierman W.C."/>
            <person name="White O."/>
            <person name="Eisen J.A."/>
            <person name="Salzberg S.L."/>
            <person name="Fraser C.M."/>
            <person name="Venter J.C."/>
        </authorList>
    </citation>
    <scope>NUCLEOTIDE SEQUENCE [LARGE SCALE GENOMIC DNA]</scope>
    <source>
        <strain>cv. Columbia</strain>
    </source>
</reference>
<reference key="2">
    <citation type="journal article" date="2017" name="Plant J.">
        <title>Araport11: a complete reannotation of the Arabidopsis thaliana reference genome.</title>
        <authorList>
            <person name="Cheng C.Y."/>
            <person name="Krishnakumar V."/>
            <person name="Chan A.P."/>
            <person name="Thibaud-Nissen F."/>
            <person name="Schobel S."/>
            <person name="Town C.D."/>
        </authorList>
    </citation>
    <scope>GENOME REANNOTATION</scope>
    <source>
        <strain>cv. Columbia</strain>
    </source>
</reference>
<reference key="3">
    <citation type="journal article" date="2003" name="Science">
        <title>Empirical analysis of transcriptional activity in the Arabidopsis genome.</title>
        <authorList>
            <person name="Yamada K."/>
            <person name="Lim J."/>
            <person name="Dale J.M."/>
            <person name="Chen H."/>
            <person name="Shinn P."/>
            <person name="Palm C.J."/>
            <person name="Southwick A.M."/>
            <person name="Wu H.C."/>
            <person name="Kim C.J."/>
            <person name="Nguyen M."/>
            <person name="Pham P.K."/>
            <person name="Cheuk R.F."/>
            <person name="Karlin-Newmann G."/>
            <person name="Liu S.X."/>
            <person name="Lam B."/>
            <person name="Sakano H."/>
            <person name="Wu T."/>
            <person name="Yu G."/>
            <person name="Miranda M."/>
            <person name="Quach H.L."/>
            <person name="Tripp M."/>
            <person name="Chang C.H."/>
            <person name="Lee J.M."/>
            <person name="Toriumi M.J."/>
            <person name="Chan M.M."/>
            <person name="Tang C.C."/>
            <person name="Onodera C.S."/>
            <person name="Deng J.M."/>
            <person name="Akiyama K."/>
            <person name="Ansari Y."/>
            <person name="Arakawa T."/>
            <person name="Banh J."/>
            <person name="Banno F."/>
            <person name="Bowser L."/>
            <person name="Brooks S.Y."/>
            <person name="Carninci P."/>
            <person name="Chao Q."/>
            <person name="Choy N."/>
            <person name="Enju A."/>
            <person name="Goldsmith A.D."/>
            <person name="Gurjal M."/>
            <person name="Hansen N.F."/>
            <person name="Hayashizaki Y."/>
            <person name="Johnson-Hopson C."/>
            <person name="Hsuan V.W."/>
            <person name="Iida K."/>
            <person name="Karnes M."/>
            <person name="Khan S."/>
            <person name="Koesema E."/>
            <person name="Ishida J."/>
            <person name="Jiang P.X."/>
            <person name="Jones T."/>
            <person name="Kawai J."/>
            <person name="Kamiya A."/>
            <person name="Meyers C."/>
            <person name="Nakajima M."/>
            <person name="Narusaka M."/>
            <person name="Seki M."/>
            <person name="Sakurai T."/>
            <person name="Satou M."/>
            <person name="Tamse R."/>
            <person name="Vaysberg M."/>
            <person name="Wallender E.K."/>
            <person name="Wong C."/>
            <person name="Yamamura Y."/>
            <person name="Yuan S."/>
            <person name="Shinozaki K."/>
            <person name="Davis R.W."/>
            <person name="Theologis A."/>
            <person name="Ecker J.R."/>
        </authorList>
    </citation>
    <scope>NUCLEOTIDE SEQUENCE [LARGE SCALE MRNA]</scope>
    <source>
        <strain>cv. Columbia</strain>
    </source>
</reference>
<reference key="4">
    <citation type="submission" date="2002-03" db="EMBL/GenBank/DDBJ databases">
        <title>Full-length cDNA from Arabidopsis thaliana.</title>
        <authorList>
            <person name="Brover V.V."/>
            <person name="Troukhan M.E."/>
            <person name="Alexandrov N.A."/>
            <person name="Lu Y.-P."/>
            <person name="Flavell R.B."/>
            <person name="Feldmann K.A."/>
        </authorList>
    </citation>
    <scope>NUCLEOTIDE SEQUENCE [LARGE SCALE MRNA]</scope>
</reference>
<reference key="5">
    <citation type="journal article" date="2003" name="Plant Physiol.">
        <title>The evolution of CONSTANS-like gene families in barley, rice, and Arabidopsis.</title>
        <authorList>
            <person name="Griffiths S."/>
            <person name="Dunford R.P."/>
            <person name="Coupland G."/>
            <person name="Laurie D.A."/>
        </authorList>
    </citation>
    <scope>GENE FAMILY</scope>
    <scope>NOMENCLATURE</scope>
</reference>
<accession>Q9SK53</accession>
<accession>Q7G9K6</accession>
<accession>Q8LDY3</accession>
<sequence length="294" mass="32324">MASSSRLCDSCKSTAATLFCRADAAFLCGDCDGKIHTANKLASRHERVWLCEVCEQAPAHVTCKADAAALCVTCDRDIHSANPLSRRHERVPITPFYDAVGPAKSASSSVNFVDEDGGDVTASWLLAKEGIEITNLFSDLDYPKIEVTSEENSSGNDGVVPVQNKLFLNEDYFNFDLSASKISQQGFNFINQTVSTRTIDVPLVPESGGVTAEMTNTETPAVQLSPAEREARVLRYREKRKNRKFEKTIRYASRKAYAEMRPRIKGRFAKRTDSRENDGGDVGVYGGFGVVPSF</sequence>
<feature type="chain" id="PRO_0000113280" description="Zinc finger protein CONSTANS-LIKE 3">
    <location>
        <begin position="1"/>
        <end position="294"/>
    </location>
</feature>
<feature type="domain" description="CCT" evidence="2">
    <location>
        <begin position="229"/>
        <end position="271"/>
    </location>
</feature>
<feature type="zinc finger region" description="B box-type 1; atypical" evidence="1">
    <location>
        <begin position="8"/>
        <end position="50"/>
    </location>
</feature>
<feature type="zinc finger region" description="B box-type 2; atypical" evidence="1">
    <location>
        <begin position="51"/>
        <end position="93"/>
    </location>
</feature>
<feature type="binding site" evidence="1">
    <location>
        <position position="8"/>
    </location>
    <ligand>
        <name>Zn(2+)</name>
        <dbReference type="ChEBI" id="CHEBI:29105"/>
        <label>1</label>
    </ligand>
</feature>
<feature type="binding site" evidence="1">
    <location>
        <position position="11"/>
    </location>
    <ligand>
        <name>Zn(2+)</name>
        <dbReference type="ChEBI" id="CHEBI:29105"/>
        <label>1</label>
    </ligand>
</feature>
<feature type="binding site" evidence="1">
    <location>
        <position position="31"/>
    </location>
    <ligand>
        <name>Zn(2+)</name>
        <dbReference type="ChEBI" id="CHEBI:29105"/>
        <label>1</label>
    </ligand>
</feature>
<feature type="binding site" evidence="1">
    <location>
        <position position="36"/>
    </location>
    <ligand>
        <name>Zn(2+)</name>
        <dbReference type="ChEBI" id="CHEBI:29105"/>
        <label>1</label>
    </ligand>
</feature>
<feature type="binding site" evidence="1">
    <location>
        <position position="51"/>
    </location>
    <ligand>
        <name>Zn(2+)</name>
        <dbReference type="ChEBI" id="CHEBI:29105"/>
        <label>2</label>
    </ligand>
</feature>
<feature type="binding site" evidence="1">
    <location>
        <position position="54"/>
    </location>
    <ligand>
        <name>Zn(2+)</name>
        <dbReference type="ChEBI" id="CHEBI:29105"/>
        <label>2</label>
    </ligand>
</feature>
<feature type="binding site" evidence="1">
    <location>
        <position position="74"/>
    </location>
    <ligand>
        <name>Zn(2+)</name>
        <dbReference type="ChEBI" id="CHEBI:29105"/>
        <label>2</label>
    </ligand>
</feature>
<feature type="binding site" evidence="1">
    <location>
        <position position="79"/>
    </location>
    <ligand>
        <name>Zn(2+)</name>
        <dbReference type="ChEBI" id="CHEBI:29105"/>
        <label>2</label>
    </ligand>
</feature>
<feature type="sequence conflict" description="In Ref. 4; AAM62947." evidence="3" ref="4">
    <original>D</original>
    <variation>N</variation>
    <location>
        <position position="30"/>
    </location>
</feature>
<feature type="sequence conflict" description="In Ref. 4; AAM62947." evidence="3" ref="4">
    <original>G</original>
    <variation>C</variation>
    <location>
        <position position="286"/>
    </location>
</feature>
<evidence type="ECO:0000255" key="1">
    <source>
        <dbReference type="PROSITE-ProRule" id="PRU00024"/>
    </source>
</evidence>
<evidence type="ECO:0000255" key="2">
    <source>
        <dbReference type="PROSITE-ProRule" id="PRU00357"/>
    </source>
</evidence>
<evidence type="ECO:0000305" key="3"/>
<gene>
    <name type="primary">COL3</name>
    <name type="ordered locus">At2g24790</name>
    <name type="ORF">F27C12.29</name>
</gene>
<name>COL3_ARATH</name>
<organism>
    <name type="scientific">Arabidopsis thaliana</name>
    <name type="common">Mouse-ear cress</name>
    <dbReference type="NCBI Taxonomy" id="3702"/>
    <lineage>
        <taxon>Eukaryota</taxon>
        <taxon>Viridiplantae</taxon>
        <taxon>Streptophyta</taxon>
        <taxon>Embryophyta</taxon>
        <taxon>Tracheophyta</taxon>
        <taxon>Spermatophyta</taxon>
        <taxon>Magnoliopsida</taxon>
        <taxon>eudicotyledons</taxon>
        <taxon>Gunneridae</taxon>
        <taxon>Pentapetalae</taxon>
        <taxon>rosids</taxon>
        <taxon>malvids</taxon>
        <taxon>Brassicales</taxon>
        <taxon>Brassicaceae</taxon>
        <taxon>Camelineae</taxon>
        <taxon>Arabidopsis</taxon>
    </lineage>
</organism>